<sequence length="578" mass="64123">MLRVVGSSVKLPVVNLTSSRGISAGIVKLNKKVAGPPPVITVKKDEPLVTPPSIEPIPITEEIVIEEKPKKKFSLFGFLFKSTLLLAAVYGGTLYVATKNDKVMDFVVDNQLPYHEELLDVIENTTKEDLEDAWYNLKGKASNVKLPTKDDIEQMTTKLEHKGEDLLKETKKKFTEATEKGRKGTELTPGEQLQRPVEVESITRNVTRLPLIELSSDVANSVDSSVRQTIASLNNFIQSIDATPLASSNTALVKSIDASLNQLAKKLNSLTTSFDEEVKNKLKKSQTELFSAYTKKELDLTENLLHQYNAEKAQLEKKLNQRLEQEVKATRDAVSQAATNAVSMVRIEQTKSFEKLVAEKINEERNGRLANLQKLNDKITELEKFAVSFENLIVKTHERNLIQRSVAALKNALLATPDVDATPKSITPYLETLAQISTNDEVLNLALRDLAPLVSQESTHSILTNAQLLSRFEQLAPELRSSSLLPPNAGLLGHLSSLVFSKLLLPVKGVKADGKDIESVIARIESSLVRGNLDVAVEEAANLKGWTRRLANDWVVDARKRLEVEFLLNLIESESRLL</sequence>
<dbReference type="EMBL" id="CH981524">
    <property type="protein sequence ID" value="EDK42090.1"/>
    <property type="molecule type" value="Genomic_DNA"/>
</dbReference>
<dbReference type="RefSeq" id="XP_001527748.1">
    <property type="nucleotide sequence ID" value="XM_001527698.1"/>
</dbReference>
<dbReference type="SMR" id="A5DSD2"/>
<dbReference type="FunCoup" id="A5DSD2">
    <property type="interactions" value="187"/>
</dbReference>
<dbReference type="STRING" id="379508.A5DSD2"/>
<dbReference type="GeneID" id="5235638"/>
<dbReference type="KEGG" id="lel:PVL30_000263"/>
<dbReference type="VEuPathDB" id="FungiDB:LELG_00268"/>
<dbReference type="eggNOG" id="KOG1854">
    <property type="taxonomic scope" value="Eukaryota"/>
</dbReference>
<dbReference type="HOGENOM" id="CLU_008024_2_0_1"/>
<dbReference type="InParanoid" id="A5DSD2"/>
<dbReference type="OMA" id="RLDHQMQ"/>
<dbReference type="OrthoDB" id="10261039at2759"/>
<dbReference type="Proteomes" id="UP000001996">
    <property type="component" value="Unassembled WGS sequence"/>
</dbReference>
<dbReference type="GO" id="GO:0061617">
    <property type="term" value="C:MICOS complex"/>
    <property type="evidence" value="ECO:0007669"/>
    <property type="project" value="TreeGrafter"/>
</dbReference>
<dbReference type="GO" id="GO:0042407">
    <property type="term" value="P:cristae formation"/>
    <property type="evidence" value="ECO:0007669"/>
    <property type="project" value="TreeGrafter"/>
</dbReference>
<dbReference type="InterPro" id="IPR019133">
    <property type="entry name" value="MIC60"/>
</dbReference>
<dbReference type="PANTHER" id="PTHR15415:SF7">
    <property type="entry name" value="MICOS COMPLEX SUBUNIT MIC60"/>
    <property type="match status" value="1"/>
</dbReference>
<dbReference type="PANTHER" id="PTHR15415">
    <property type="entry name" value="MITOFILIN"/>
    <property type="match status" value="1"/>
</dbReference>
<dbReference type="Pfam" id="PF09731">
    <property type="entry name" value="Mitofilin"/>
    <property type="match status" value="1"/>
</dbReference>
<proteinExistence type="inferred from homology"/>
<comment type="function">
    <text evidence="1">Component of the MICOS complex, a large protein complex of the mitochondrial inner membrane that plays crucial roles in the maintenance of crista junctions, inner membrane architecture, and formation of contact sites to the outer membrane. Plays a role in keeping cristae membranes connected to the inner boundary membrane. Also promotes protein import via the mitochondrial intermembrane space assembly (MIA) pathway (By similarity).</text>
</comment>
<comment type="subunit">
    <text evidence="1">Component of the mitochondrial contact site and cristae organizing system (MICOS) complex.</text>
</comment>
<comment type="subcellular location">
    <subcellularLocation>
        <location evidence="1">Mitochondrion inner membrane</location>
        <topology evidence="1">Single-pass membrane protein</topology>
    </subcellularLocation>
</comment>
<comment type="similarity">
    <text evidence="4">Belongs to the MICOS complex subunit Mic60 family.</text>
</comment>
<name>MIC60_LODEL</name>
<evidence type="ECO:0000250" key="1"/>
<evidence type="ECO:0000255" key="2"/>
<evidence type="ECO:0000256" key="3">
    <source>
        <dbReference type="SAM" id="MobiDB-lite"/>
    </source>
</evidence>
<evidence type="ECO:0000305" key="4"/>
<accession>A5DSD2</accession>
<gene>
    <name type="primary">MIC60</name>
    <name type="ORF">LELG_00268</name>
</gene>
<reference key="1">
    <citation type="journal article" date="2009" name="Nature">
        <title>Evolution of pathogenicity and sexual reproduction in eight Candida genomes.</title>
        <authorList>
            <person name="Butler G."/>
            <person name="Rasmussen M.D."/>
            <person name="Lin M.F."/>
            <person name="Santos M.A.S."/>
            <person name="Sakthikumar S."/>
            <person name="Munro C.A."/>
            <person name="Rheinbay E."/>
            <person name="Grabherr M."/>
            <person name="Forche A."/>
            <person name="Reedy J.L."/>
            <person name="Agrafioti I."/>
            <person name="Arnaud M.B."/>
            <person name="Bates S."/>
            <person name="Brown A.J.P."/>
            <person name="Brunke S."/>
            <person name="Costanzo M.C."/>
            <person name="Fitzpatrick D.A."/>
            <person name="de Groot P.W.J."/>
            <person name="Harris D."/>
            <person name="Hoyer L.L."/>
            <person name="Hube B."/>
            <person name="Klis F.M."/>
            <person name="Kodira C."/>
            <person name="Lennard N."/>
            <person name="Logue M.E."/>
            <person name="Martin R."/>
            <person name="Neiman A.M."/>
            <person name="Nikolaou E."/>
            <person name="Quail M.A."/>
            <person name="Quinn J."/>
            <person name="Santos M.C."/>
            <person name="Schmitzberger F.F."/>
            <person name="Sherlock G."/>
            <person name="Shah P."/>
            <person name="Silverstein K.A.T."/>
            <person name="Skrzypek M.S."/>
            <person name="Soll D."/>
            <person name="Staggs R."/>
            <person name="Stansfield I."/>
            <person name="Stumpf M.P.H."/>
            <person name="Sudbery P.E."/>
            <person name="Srikantha T."/>
            <person name="Zeng Q."/>
            <person name="Berman J."/>
            <person name="Berriman M."/>
            <person name="Heitman J."/>
            <person name="Gow N.A.R."/>
            <person name="Lorenz M.C."/>
            <person name="Birren B.W."/>
            <person name="Kellis M."/>
            <person name="Cuomo C.A."/>
        </authorList>
    </citation>
    <scope>NUCLEOTIDE SEQUENCE [LARGE SCALE GENOMIC DNA]</scope>
    <source>
        <strain>ATCC 11503 / BCRC 21390 / CBS 2605 / JCM 1781 / NBRC 1676 / NRRL YB-4239</strain>
    </source>
</reference>
<keyword id="KW-0175">Coiled coil</keyword>
<keyword id="KW-0472">Membrane</keyword>
<keyword id="KW-0496">Mitochondrion</keyword>
<keyword id="KW-0999">Mitochondrion inner membrane</keyword>
<keyword id="KW-1185">Reference proteome</keyword>
<keyword id="KW-0809">Transit peptide</keyword>
<keyword id="KW-0812">Transmembrane</keyword>
<keyword id="KW-1133">Transmembrane helix</keyword>
<organism>
    <name type="scientific">Lodderomyces elongisporus (strain ATCC 11503 / CBS 2605 / JCM 1781 / NBRC 1676 / NRRL YB-4239)</name>
    <name type="common">Yeast</name>
    <name type="synonym">Saccharomyces elongisporus</name>
    <dbReference type="NCBI Taxonomy" id="379508"/>
    <lineage>
        <taxon>Eukaryota</taxon>
        <taxon>Fungi</taxon>
        <taxon>Dikarya</taxon>
        <taxon>Ascomycota</taxon>
        <taxon>Saccharomycotina</taxon>
        <taxon>Pichiomycetes</taxon>
        <taxon>Debaryomycetaceae</taxon>
        <taxon>Candida/Lodderomyces clade</taxon>
        <taxon>Lodderomyces</taxon>
    </lineage>
</organism>
<feature type="transit peptide" description="Mitochondrion" evidence="2">
    <location>
        <begin position="1"/>
        <end position="29"/>
    </location>
</feature>
<feature type="chain" id="PRO_0000406658" description="MICOS complex subunit MIC60">
    <location>
        <begin position="30"/>
        <end position="578"/>
    </location>
</feature>
<feature type="topological domain" description="Mitochondrial matrix" evidence="2">
    <location>
        <begin position="30"/>
        <end position="74"/>
    </location>
</feature>
<feature type="transmembrane region" description="Helical" evidence="2">
    <location>
        <begin position="75"/>
        <end position="97"/>
    </location>
</feature>
<feature type="topological domain" description="Mitochondrial intermembrane" evidence="2">
    <location>
        <begin position="98"/>
        <end position="578"/>
    </location>
</feature>
<feature type="region of interest" description="Disordered" evidence="3">
    <location>
        <begin position="174"/>
        <end position="193"/>
    </location>
</feature>
<feature type="coiled-coil region" evidence="2">
    <location>
        <begin position="294"/>
        <end position="392"/>
    </location>
</feature>
<feature type="compositionally biased region" description="Basic and acidic residues" evidence="3">
    <location>
        <begin position="174"/>
        <end position="185"/>
    </location>
</feature>
<protein>
    <recommendedName>
        <fullName>MICOS complex subunit MIC60</fullName>
    </recommendedName>
    <alternativeName>
        <fullName>Mitofilin</fullName>
    </alternativeName>
</protein>